<evidence type="ECO:0000255" key="1">
    <source>
        <dbReference type="HAMAP-Rule" id="MF_01609"/>
    </source>
</evidence>
<name>GCS2_CHRVO</name>
<dbReference type="EC" id="6.3.2.2" evidence="1"/>
<dbReference type="EMBL" id="AE016825">
    <property type="protein sequence ID" value="AAQ60572.1"/>
    <property type="molecule type" value="Genomic_DNA"/>
</dbReference>
<dbReference type="RefSeq" id="WP_011136451.1">
    <property type="nucleotide sequence ID" value="NC_005085.1"/>
</dbReference>
<dbReference type="SMR" id="Q7NTZ9"/>
<dbReference type="STRING" id="243365.CV_2904"/>
<dbReference type="KEGG" id="cvi:CV_2904"/>
<dbReference type="eggNOG" id="COG2170">
    <property type="taxonomic scope" value="Bacteria"/>
</dbReference>
<dbReference type="HOGENOM" id="CLU_044848_1_1_4"/>
<dbReference type="OrthoDB" id="9769628at2"/>
<dbReference type="Proteomes" id="UP000001424">
    <property type="component" value="Chromosome"/>
</dbReference>
<dbReference type="GO" id="GO:0005524">
    <property type="term" value="F:ATP binding"/>
    <property type="evidence" value="ECO:0007669"/>
    <property type="project" value="UniProtKB-KW"/>
</dbReference>
<dbReference type="GO" id="GO:0004357">
    <property type="term" value="F:glutamate-cysteine ligase activity"/>
    <property type="evidence" value="ECO:0007669"/>
    <property type="project" value="UniProtKB-EC"/>
</dbReference>
<dbReference type="GO" id="GO:0042398">
    <property type="term" value="P:modified amino acid biosynthetic process"/>
    <property type="evidence" value="ECO:0007669"/>
    <property type="project" value="InterPro"/>
</dbReference>
<dbReference type="Gene3D" id="3.30.590.20">
    <property type="match status" value="1"/>
</dbReference>
<dbReference type="HAMAP" id="MF_01609">
    <property type="entry name" value="Glu_cys_ligase_2"/>
    <property type="match status" value="1"/>
</dbReference>
<dbReference type="InterPro" id="IPR050141">
    <property type="entry name" value="GCL_type2/YbdK_subfam"/>
</dbReference>
<dbReference type="InterPro" id="IPR006336">
    <property type="entry name" value="GCS2"/>
</dbReference>
<dbReference type="InterPro" id="IPR014746">
    <property type="entry name" value="Gln_synth/guanido_kin_cat_dom"/>
</dbReference>
<dbReference type="InterPro" id="IPR011793">
    <property type="entry name" value="YbdK"/>
</dbReference>
<dbReference type="NCBIfam" id="TIGR02050">
    <property type="entry name" value="gshA_cyan_rel"/>
    <property type="match status" value="1"/>
</dbReference>
<dbReference type="NCBIfam" id="NF010040">
    <property type="entry name" value="PRK13516.1"/>
    <property type="match status" value="1"/>
</dbReference>
<dbReference type="PANTHER" id="PTHR36510">
    <property type="entry name" value="GLUTAMATE--CYSTEINE LIGASE 2-RELATED"/>
    <property type="match status" value="1"/>
</dbReference>
<dbReference type="PANTHER" id="PTHR36510:SF1">
    <property type="entry name" value="GLUTAMATE--CYSTEINE LIGASE 2-RELATED"/>
    <property type="match status" value="1"/>
</dbReference>
<dbReference type="Pfam" id="PF04107">
    <property type="entry name" value="GCS2"/>
    <property type="match status" value="1"/>
</dbReference>
<dbReference type="SUPFAM" id="SSF55931">
    <property type="entry name" value="Glutamine synthetase/guanido kinase"/>
    <property type="match status" value="1"/>
</dbReference>
<accession>Q7NTZ9</accession>
<gene>
    <name type="ordered locus">CV_2904</name>
</gene>
<protein>
    <recommendedName>
        <fullName evidence="1">Putative glutamate--cysteine ligase 2</fullName>
        <ecNumber evidence="1">6.3.2.2</ecNumber>
    </recommendedName>
    <alternativeName>
        <fullName evidence="1">Gamma-glutamylcysteine synthetase 2</fullName>
        <shortName evidence="1">GCS 2</shortName>
        <shortName evidence="1">Gamma-GCS 2</shortName>
    </alternativeName>
</protein>
<proteinExistence type="inferred from homology"/>
<keyword id="KW-0067">ATP-binding</keyword>
<keyword id="KW-0436">Ligase</keyword>
<keyword id="KW-0547">Nucleotide-binding</keyword>
<keyword id="KW-1185">Reference proteome</keyword>
<comment type="function">
    <text evidence="1">ATP-dependent carboxylate-amine ligase which exhibits weak glutamate--cysteine ligase activity.</text>
</comment>
<comment type="catalytic activity">
    <reaction evidence="1">
        <text>L-cysteine + L-glutamate + ATP = gamma-L-glutamyl-L-cysteine + ADP + phosphate + H(+)</text>
        <dbReference type="Rhea" id="RHEA:13285"/>
        <dbReference type="ChEBI" id="CHEBI:15378"/>
        <dbReference type="ChEBI" id="CHEBI:29985"/>
        <dbReference type="ChEBI" id="CHEBI:30616"/>
        <dbReference type="ChEBI" id="CHEBI:35235"/>
        <dbReference type="ChEBI" id="CHEBI:43474"/>
        <dbReference type="ChEBI" id="CHEBI:58173"/>
        <dbReference type="ChEBI" id="CHEBI:456216"/>
        <dbReference type="EC" id="6.3.2.2"/>
    </reaction>
</comment>
<comment type="similarity">
    <text evidence="1">Belongs to the glutamate--cysteine ligase type 2 family. YbdK subfamily.</text>
</comment>
<sequence length="377" mass="42860">MLEFNQSQPLTLGVELELMILNRRDYNLTRGSDDLLLQINRKPHGYDIKPEITQGMIEIGTAVHSDVNAMLDELLAIRTLLVDSAHKLNLGLAGGGAHPFQHWEDQRIYPKERYKLVSELYGYLAKQFTVYGQHIHIGCPDGDAAVRLTHYLARYIPHFIALSASSPFYQGVDTSFQTSRLTSVNAFPLSGCMPVVDSWDAFNAYFERMEALGIVASMKDFYWDIRPKPEYGTVEIRICDTPLSVETPVLLAAYAQMLARRCFEESWNDICPEPYLTYSYNRFQACRFGFDGVMVDARSKSQLGLQEDLLDTLRALEPHAEALGSQHQLAALRQRALKCHSDSRWLRQIFEQSGSLSEVVRRQSEHWMYAEPGVGVN</sequence>
<organism>
    <name type="scientific">Chromobacterium violaceum (strain ATCC 12472 / DSM 30191 / JCM 1249 / CCUG 213 / NBRC 12614 / NCIMB 9131 / NCTC 9757 / MK)</name>
    <dbReference type="NCBI Taxonomy" id="243365"/>
    <lineage>
        <taxon>Bacteria</taxon>
        <taxon>Pseudomonadati</taxon>
        <taxon>Pseudomonadota</taxon>
        <taxon>Betaproteobacteria</taxon>
        <taxon>Neisseriales</taxon>
        <taxon>Chromobacteriaceae</taxon>
        <taxon>Chromobacterium</taxon>
    </lineage>
</organism>
<reference key="1">
    <citation type="journal article" date="2003" name="Proc. Natl. Acad. Sci. U.S.A.">
        <title>The complete genome sequence of Chromobacterium violaceum reveals remarkable and exploitable bacterial adaptability.</title>
        <authorList>
            <person name="Vasconcelos A.T.R."/>
            <person name="de Almeida D.F."/>
            <person name="Hungria M."/>
            <person name="Guimaraes C.T."/>
            <person name="Antonio R.V."/>
            <person name="Almeida F.C."/>
            <person name="de Almeida L.G.P."/>
            <person name="de Almeida R."/>
            <person name="Alves-Gomes J.A."/>
            <person name="Andrade E.M."/>
            <person name="Araripe J."/>
            <person name="de Araujo M.F.F."/>
            <person name="Astolfi-Filho S."/>
            <person name="Azevedo V."/>
            <person name="Baptista A.J."/>
            <person name="Bataus L.A.M."/>
            <person name="Batista J.S."/>
            <person name="Belo A."/>
            <person name="van den Berg C."/>
            <person name="Bogo M."/>
            <person name="Bonatto S."/>
            <person name="Bordignon J."/>
            <person name="Brigido M.M."/>
            <person name="Brito C.A."/>
            <person name="Brocchi M."/>
            <person name="Burity H.A."/>
            <person name="Camargo A.A."/>
            <person name="Cardoso D.D.P."/>
            <person name="Carneiro N.P."/>
            <person name="Carraro D.M."/>
            <person name="Carvalho C.M.B."/>
            <person name="Cascardo J.C.M."/>
            <person name="Cavada B.S."/>
            <person name="Chueire L.M.O."/>
            <person name="Creczynski-Pasa T.B."/>
            <person name="Cunha-Junior N.C."/>
            <person name="Fagundes N."/>
            <person name="Falcao C.L."/>
            <person name="Fantinatti F."/>
            <person name="Farias I.P."/>
            <person name="Felipe M.S.S."/>
            <person name="Ferrari L.P."/>
            <person name="Ferro J.A."/>
            <person name="Ferro M.I.T."/>
            <person name="Franco G.R."/>
            <person name="Freitas N.S.A."/>
            <person name="Furlan L.R."/>
            <person name="Gazzinelli R.T."/>
            <person name="Gomes E.A."/>
            <person name="Goncalves P.R."/>
            <person name="Grangeiro T.B."/>
            <person name="Grattapaglia D."/>
            <person name="Grisard E.C."/>
            <person name="Hanna E.S."/>
            <person name="Jardim S.N."/>
            <person name="Laurino J."/>
            <person name="Leoi L.C.T."/>
            <person name="Lima L.F.A."/>
            <person name="Loureiro M.F."/>
            <person name="Lyra M.C.C.P."/>
            <person name="Madeira H.M.F."/>
            <person name="Manfio G.P."/>
            <person name="Maranhao A.Q."/>
            <person name="Martins W.S."/>
            <person name="di Mauro S.M.Z."/>
            <person name="de Medeiros S.R.B."/>
            <person name="Meissner R.V."/>
            <person name="Moreira M.A.M."/>
            <person name="Nascimento F.F."/>
            <person name="Nicolas M.F."/>
            <person name="Oliveira J.G."/>
            <person name="Oliveira S.C."/>
            <person name="Paixao R.F.C."/>
            <person name="Parente J.A."/>
            <person name="Pedrosa F.O."/>
            <person name="Pena S.D.J."/>
            <person name="Pereira J.O."/>
            <person name="Pereira M."/>
            <person name="Pinto L.S.R.C."/>
            <person name="Pinto L.S."/>
            <person name="Porto J.I.R."/>
            <person name="Potrich D.P."/>
            <person name="Ramalho-Neto C.E."/>
            <person name="Reis A.M.M."/>
            <person name="Rigo L.U."/>
            <person name="Rondinelli E."/>
            <person name="Santos E.B.P."/>
            <person name="Santos F.R."/>
            <person name="Schneider M.P.C."/>
            <person name="Seuanez H.N."/>
            <person name="Silva A.M.R."/>
            <person name="da Silva A.L.C."/>
            <person name="Silva D.W."/>
            <person name="Silva R."/>
            <person name="Simoes I.C."/>
            <person name="Simon D."/>
            <person name="Soares C.M.A."/>
            <person name="Soares R.B.A."/>
            <person name="Souza E.M."/>
            <person name="Souza K.R.L."/>
            <person name="Souza R.C."/>
            <person name="Steffens M.B.R."/>
            <person name="Steindel M."/>
            <person name="Teixeira S.R."/>
            <person name="Urmenyi T."/>
            <person name="Vettore A."/>
            <person name="Wassem R."/>
            <person name="Zaha A."/>
            <person name="Simpson A.J.G."/>
        </authorList>
    </citation>
    <scope>NUCLEOTIDE SEQUENCE [LARGE SCALE GENOMIC DNA]</scope>
    <source>
        <strain>ATCC 12472 / DSM 30191 / JCM 1249 / CCUG 213 / NBRC 12614 / NCIMB 9131 / NCTC 9757 / MK</strain>
    </source>
</reference>
<feature type="chain" id="PRO_0000218191" description="Putative glutamate--cysteine ligase 2">
    <location>
        <begin position="1"/>
        <end position="377"/>
    </location>
</feature>